<reference key="1">
    <citation type="journal article" date="2006" name="Comp. Biochem. Physiol.">
        <title>Comparison of the partial proteomes of the venoms of Brazilian spiders of the genus Phoneutria.</title>
        <authorList>
            <person name="Richardson M."/>
            <person name="Pimenta A.M."/>
            <person name="Bemquerer M.P."/>
            <person name="Santoro M.M."/>
            <person name="Beirao P.S."/>
            <person name="Lima M.E."/>
            <person name="Figueiredo S.G."/>
            <person name="Bloch C. Jr."/>
            <person name="Vasconcelos E.A."/>
            <person name="Campos F.A."/>
            <person name="Gomes P.C."/>
            <person name="Cordeiro M.N."/>
        </authorList>
    </citation>
    <scope>PROTEIN SEQUENCE</scope>
    <scope>SUBCELLULAR LOCATION</scope>
    <scope>TISSUE SPECIFICITY</scope>
    <scope>MASS SPECTROMETRY</scope>
    <source>
        <tissue>Venom</tissue>
    </source>
</reference>
<reference evidence="4" key="2">
    <citation type="submission" date="2004-04" db="UniProtKB">
        <title>Neurotoxin PKTx19C5 from venom of Brazilian wandering spider Phoneutria keyserling has sequence similarity with PNTx3-3 from Phoneutria nigriventer.</title>
        <authorList>
            <person name="Richardson M."/>
            <person name="Pimenta A.M.C."/>
            <person name="Bemquerer M.P."/>
            <person name="Santoro M.M."/>
            <person name="Figueiredo S.G."/>
            <person name="Cordeiro M.N."/>
        </authorList>
    </citation>
    <scope>PROTEIN SEQUENCE</scope>
    <scope>FUNCTION</scope>
    <scope>SUBCELLULAR LOCATION</scope>
    <scope>TISSUE SPECIFICITY</scope>
    <scope>VARIANTS LEU-8; ASP-35; ASP-36; THR-39 AND ASN-43</scope>
    <source>
        <tissue>Venom</tissue>
    </source>
</reference>
<feature type="chain" id="PRO_0000087632" description="U1-ctenitoxin-Pk1a">
    <location>
        <begin position="1"/>
        <end position="45"/>
    </location>
</feature>
<feature type="disulfide bond" evidence="1">
    <location>
        <begin position="3"/>
        <end position="16"/>
    </location>
</feature>
<feature type="disulfide bond" evidence="1">
    <location>
        <begin position="10"/>
        <end position="25"/>
    </location>
</feature>
<feature type="disulfide bond" evidence="1">
    <location>
        <begin position="15"/>
        <end position="34"/>
    </location>
</feature>
<feature type="disulfide bond" evidence="1">
    <location>
        <begin position="27"/>
        <end position="32"/>
    </location>
</feature>
<feature type="sequence variant" evidence="3">
    <original>K</original>
    <variation>L</variation>
    <location>
        <position position="8"/>
    </location>
</feature>
<feature type="sequence variant" evidence="3">
    <original>E</original>
    <variation>D</variation>
    <location>
        <position position="35"/>
    </location>
</feature>
<feature type="sequence variant" evidence="3">
    <original>E</original>
    <variation>D</variation>
    <location>
        <position position="36"/>
    </location>
</feature>
<feature type="sequence variant" evidence="3">
    <original>K</original>
    <variation>T</variation>
    <location>
        <position position="39"/>
    </location>
</feature>
<feature type="sequence variant" evidence="3">
    <original>H</original>
    <variation>N</variation>
    <location>
        <position position="43"/>
    </location>
</feature>
<keyword id="KW-0903">Direct protein sequencing</keyword>
<keyword id="KW-1015">Disulfide bond</keyword>
<keyword id="KW-0960">Knottin</keyword>
<keyword id="KW-0528">Neurotoxin</keyword>
<keyword id="KW-0964">Secreted</keyword>
<keyword id="KW-0800">Toxin</keyword>
<organism evidence="4">
    <name type="scientific">Phoneutria keyserlingi</name>
    <name type="common">Brazilian wandering spider</name>
    <name type="synonym">Ctenus keyserlingii</name>
    <dbReference type="NCBI Taxonomy" id="272754"/>
    <lineage>
        <taxon>Eukaryota</taxon>
        <taxon>Metazoa</taxon>
        <taxon>Ecdysozoa</taxon>
        <taxon>Arthropoda</taxon>
        <taxon>Chelicerata</taxon>
        <taxon>Arachnida</taxon>
        <taxon>Araneae</taxon>
        <taxon>Araneomorphae</taxon>
        <taxon>Entelegynae</taxon>
        <taxon>Lycosoidea</taxon>
        <taxon>Ctenidae</taxon>
        <taxon>Phoneutria</taxon>
    </lineage>
</organism>
<name>TX21A_PHOKE</name>
<evidence type="ECO:0000250" key="1"/>
<evidence type="ECO:0000269" key="2">
    <source>
    </source>
</evidence>
<evidence type="ECO:0000269" key="3">
    <source ref="2"/>
</evidence>
<evidence type="ECO:0000305" key="4"/>
<sequence length="45" mass="5033">GKCADAWKSCDNLPCCVVNGYSRTCMCSANRCNCEETKKLREHFG</sequence>
<protein>
    <recommendedName>
        <fullName>U1-ctenitoxin-Pk1a</fullName>
        <shortName>U1-CNTX-Pk1a</shortName>
    </recommendedName>
    <alternativeName>
        <fullName>Neurotoxin PKTx19C5</fullName>
    </alternativeName>
</protein>
<accession>P83895</accession>
<proteinExistence type="evidence at protein level"/>
<dbReference type="SMR" id="P83895"/>
<dbReference type="ArachnoServer" id="AS000217">
    <property type="toxin name" value="U1-ctenitoxin-Pk1a"/>
</dbReference>
<dbReference type="GO" id="GO:0005576">
    <property type="term" value="C:extracellular region"/>
    <property type="evidence" value="ECO:0007669"/>
    <property type="project" value="UniProtKB-SubCell"/>
</dbReference>
<dbReference type="GO" id="GO:0090729">
    <property type="term" value="F:toxin activity"/>
    <property type="evidence" value="ECO:0007669"/>
    <property type="project" value="UniProtKB-KW"/>
</dbReference>
<comment type="function">
    <text evidence="3 4">Neurotoxin. Causes rapid general flaccid paralysis and death in mice at dose levels of 5 ug per mouse.</text>
</comment>
<comment type="subcellular location">
    <subcellularLocation>
        <location evidence="2 3 4">Secreted</location>
    </subcellularLocation>
</comment>
<comment type="tissue specificity">
    <text evidence="2 3 4">Expressed by the venom gland.</text>
</comment>
<comment type="domain">
    <text evidence="1">The presence of a 'disulfide through disulfide knot' structurally defines this protein as a knottin.</text>
</comment>
<comment type="mass spectrometry" mass="5101.8" method="Electrospray" evidence="2"/>
<comment type="similarity">
    <text evidence="4">Belongs to the neurotoxin 02 (plectoxin) family. 01 (Tx3) subfamily.</text>
</comment>